<evidence type="ECO:0000255" key="1">
    <source>
        <dbReference type="HAMAP-Rule" id="MF_00310"/>
    </source>
</evidence>
<organism>
    <name type="scientific">Streptococcus pyogenes serotype M4 (strain MGAS10750)</name>
    <dbReference type="NCBI Taxonomy" id="370554"/>
    <lineage>
        <taxon>Bacteria</taxon>
        <taxon>Bacillati</taxon>
        <taxon>Bacillota</taxon>
        <taxon>Bacilli</taxon>
        <taxon>Lactobacillales</taxon>
        <taxon>Streptococcaceae</taxon>
        <taxon>Streptococcus</taxon>
    </lineage>
</organism>
<protein>
    <recommendedName>
        <fullName evidence="1">V-type ATP synthase beta chain</fullName>
    </recommendedName>
    <alternativeName>
        <fullName evidence="1">V-ATPase subunit B</fullName>
    </alternativeName>
</protein>
<gene>
    <name evidence="1" type="primary">atpB</name>
    <name type="ordered locus">MGAS10750_Spy0137</name>
</gene>
<accession>Q1J8S4</accession>
<feature type="chain" id="PRO_1000059393" description="V-type ATP synthase beta chain">
    <location>
        <begin position="1"/>
        <end position="471"/>
    </location>
</feature>
<keyword id="KW-0066">ATP synthesis</keyword>
<keyword id="KW-0375">Hydrogen ion transport</keyword>
<keyword id="KW-0406">Ion transport</keyword>
<keyword id="KW-0813">Transport</keyword>
<comment type="function">
    <text evidence="1">Produces ATP from ADP in the presence of a proton gradient across the membrane. The V-type beta chain is a regulatory subunit.</text>
</comment>
<comment type="similarity">
    <text evidence="1">Belongs to the ATPase alpha/beta chains family.</text>
</comment>
<sequence>MSVLKEYRTVSEVVGPLMIVDQVAGVHYNELVDITLHNGERRKGQVLEVQGDKAMVQLFEGSTGINLAKTKVRFTGHPLELAVSEDMVGRIFDGMGQPIDGGPELIPEKYLDIDGQAINPVARDYPDEFIQTGISAIDHLNTLVRGQKLPVFSGSGLPHNELAAQIARQATVLNSDDNFAVVFAAMGITFEEAEFFMNDLRETGAIDRSVLFINLANDPAIERIATPRIALTTAEYLAYEKGMHVLVIMTDMTNYCEALREVSAARREVPGRRGYPGYLYTNLSTLYERAGRLIGKKGSVTQIPILTMPEDDITHPIPDLTGYITEGQIILSQELYKNGFRPPINVLPSLSRLKDKGSGEGKTRQDHAATMNQLFAAYAQGKQAKELAVVLGESALSETDKLYVAFTNRFEEEYINQGFYTNRSIEESLDLGWELLSILPRTELKRIKDDMLDRYLPKADTTMTKVFVAND</sequence>
<name>VATB_STRPF</name>
<proteinExistence type="inferred from homology"/>
<reference key="1">
    <citation type="journal article" date="2006" name="Proc. Natl. Acad. Sci. U.S.A.">
        <title>Molecular genetic anatomy of inter- and intraserotype variation in the human bacterial pathogen group A Streptococcus.</title>
        <authorList>
            <person name="Beres S.B."/>
            <person name="Richter E.W."/>
            <person name="Nagiec M.J."/>
            <person name="Sumby P."/>
            <person name="Porcella S.F."/>
            <person name="DeLeo F.R."/>
            <person name="Musser J.M."/>
        </authorList>
    </citation>
    <scope>NUCLEOTIDE SEQUENCE [LARGE SCALE GENOMIC DNA]</scope>
    <source>
        <strain>MGAS10750</strain>
    </source>
</reference>
<dbReference type="EMBL" id="CP000262">
    <property type="protein sequence ID" value="ABF37087.1"/>
    <property type="molecule type" value="Genomic_DNA"/>
</dbReference>
<dbReference type="SMR" id="Q1J8S4"/>
<dbReference type="KEGG" id="spi:MGAS10750_Spy0137"/>
<dbReference type="HOGENOM" id="CLU_022916_0_0_9"/>
<dbReference type="Proteomes" id="UP000002434">
    <property type="component" value="Chromosome"/>
</dbReference>
<dbReference type="GO" id="GO:0005524">
    <property type="term" value="F:ATP binding"/>
    <property type="evidence" value="ECO:0007669"/>
    <property type="project" value="UniProtKB-UniRule"/>
</dbReference>
<dbReference type="GO" id="GO:0046933">
    <property type="term" value="F:proton-transporting ATP synthase activity, rotational mechanism"/>
    <property type="evidence" value="ECO:0007669"/>
    <property type="project" value="UniProtKB-UniRule"/>
</dbReference>
<dbReference type="GO" id="GO:0042777">
    <property type="term" value="P:proton motive force-driven plasma membrane ATP synthesis"/>
    <property type="evidence" value="ECO:0007669"/>
    <property type="project" value="UniProtKB-UniRule"/>
</dbReference>
<dbReference type="CDD" id="cd18112">
    <property type="entry name" value="ATP-synt_V_A-type_beta_C"/>
    <property type="match status" value="1"/>
</dbReference>
<dbReference type="CDD" id="cd18118">
    <property type="entry name" value="ATP-synt_V_A-type_beta_N"/>
    <property type="match status" value="1"/>
</dbReference>
<dbReference type="CDD" id="cd01135">
    <property type="entry name" value="V_A-ATPase_B"/>
    <property type="match status" value="1"/>
</dbReference>
<dbReference type="Gene3D" id="3.40.50.12240">
    <property type="match status" value="1"/>
</dbReference>
<dbReference type="HAMAP" id="MF_00310">
    <property type="entry name" value="ATP_synth_B_arch"/>
    <property type="match status" value="1"/>
</dbReference>
<dbReference type="InterPro" id="IPR055190">
    <property type="entry name" value="ATP-synt_VA_C"/>
</dbReference>
<dbReference type="InterPro" id="IPR020003">
    <property type="entry name" value="ATPase_a/bsu_AS"/>
</dbReference>
<dbReference type="InterPro" id="IPR004100">
    <property type="entry name" value="ATPase_F1/V1/A1_a/bsu_N"/>
</dbReference>
<dbReference type="InterPro" id="IPR000194">
    <property type="entry name" value="ATPase_F1/V1/A1_a/bsu_nucl-bd"/>
</dbReference>
<dbReference type="InterPro" id="IPR027417">
    <property type="entry name" value="P-loop_NTPase"/>
</dbReference>
<dbReference type="InterPro" id="IPR022879">
    <property type="entry name" value="V-ATPase_su_B/beta"/>
</dbReference>
<dbReference type="NCBIfam" id="NF003235">
    <property type="entry name" value="PRK04196.1"/>
    <property type="match status" value="1"/>
</dbReference>
<dbReference type="PANTHER" id="PTHR43389">
    <property type="entry name" value="V-TYPE PROTON ATPASE SUBUNIT B"/>
    <property type="match status" value="1"/>
</dbReference>
<dbReference type="PANTHER" id="PTHR43389:SF4">
    <property type="entry name" value="V-TYPE PROTON ATPASE SUBUNIT B"/>
    <property type="match status" value="1"/>
</dbReference>
<dbReference type="Pfam" id="PF00006">
    <property type="entry name" value="ATP-synt_ab"/>
    <property type="match status" value="1"/>
</dbReference>
<dbReference type="Pfam" id="PF02874">
    <property type="entry name" value="ATP-synt_ab_N"/>
    <property type="match status" value="1"/>
</dbReference>
<dbReference type="Pfam" id="PF22919">
    <property type="entry name" value="ATP-synt_VA_C"/>
    <property type="match status" value="1"/>
</dbReference>
<dbReference type="PIRSF" id="PIRSF039114">
    <property type="entry name" value="V-ATPsynth_beta/V-ATPase_B"/>
    <property type="match status" value="1"/>
</dbReference>
<dbReference type="SUPFAM" id="SSF47917">
    <property type="entry name" value="C-terminal domain of alpha and beta subunits of F1 ATP synthase"/>
    <property type="match status" value="1"/>
</dbReference>
<dbReference type="SUPFAM" id="SSF52540">
    <property type="entry name" value="P-loop containing nucleoside triphosphate hydrolases"/>
    <property type="match status" value="1"/>
</dbReference>
<dbReference type="PROSITE" id="PS00152">
    <property type="entry name" value="ATPASE_ALPHA_BETA"/>
    <property type="match status" value="1"/>
</dbReference>